<proteinExistence type="inferred from homology"/>
<protein>
    <recommendedName>
        <fullName evidence="1">tRNA(Ile)-lysidine synthase</fullName>
        <ecNumber evidence="1">6.3.4.19</ecNumber>
    </recommendedName>
    <alternativeName>
        <fullName evidence="1">tRNA(Ile)-2-lysyl-cytidine synthase</fullName>
    </alternativeName>
    <alternativeName>
        <fullName evidence="1">tRNA(Ile)-lysidine synthetase</fullName>
    </alternativeName>
</protein>
<feature type="chain" id="PRO_0000181745" description="tRNA(Ile)-lysidine synthase">
    <location>
        <begin position="1"/>
        <end position="336"/>
    </location>
</feature>
<feature type="binding site" evidence="1">
    <location>
        <begin position="40"/>
        <end position="45"/>
    </location>
    <ligand>
        <name>ATP</name>
        <dbReference type="ChEBI" id="CHEBI:30616"/>
    </ligand>
</feature>
<gene>
    <name evidence="1" type="primary">tilS</name>
    <name type="ordered locus">Pro_1811</name>
</gene>
<evidence type="ECO:0000255" key="1">
    <source>
        <dbReference type="HAMAP-Rule" id="MF_01161"/>
    </source>
</evidence>
<comment type="function">
    <text evidence="1">Ligates lysine onto the cytidine present at position 34 of the AUA codon-specific tRNA(Ile) that contains the anticodon CAU, in an ATP-dependent manner. Cytidine is converted to lysidine, thus changing the amino acid specificity of the tRNA from methionine to isoleucine.</text>
</comment>
<comment type="catalytic activity">
    <reaction evidence="1">
        <text>cytidine(34) in tRNA(Ile2) + L-lysine + ATP = lysidine(34) in tRNA(Ile2) + AMP + diphosphate + H(+)</text>
        <dbReference type="Rhea" id="RHEA:43744"/>
        <dbReference type="Rhea" id="RHEA-COMP:10625"/>
        <dbReference type="Rhea" id="RHEA-COMP:10670"/>
        <dbReference type="ChEBI" id="CHEBI:15378"/>
        <dbReference type="ChEBI" id="CHEBI:30616"/>
        <dbReference type="ChEBI" id="CHEBI:32551"/>
        <dbReference type="ChEBI" id="CHEBI:33019"/>
        <dbReference type="ChEBI" id="CHEBI:82748"/>
        <dbReference type="ChEBI" id="CHEBI:83665"/>
        <dbReference type="ChEBI" id="CHEBI:456215"/>
        <dbReference type="EC" id="6.3.4.19"/>
    </reaction>
</comment>
<comment type="subcellular location">
    <subcellularLocation>
        <location evidence="1">Cytoplasm</location>
    </subcellularLocation>
</comment>
<comment type="domain">
    <text>The N-terminal region contains the highly conserved SGGXDS motif, predicted to be a P-loop motif involved in ATP binding.</text>
</comment>
<comment type="similarity">
    <text evidence="1">Belongs to the tRNA(Ile)-lysidine synthase family.</text>
</comment>
<reference key="1">
    <citation type="journal article" date="2003" name="Proc. Natl. Acad. Sci. U.S.A.">
        <title>Genome sequence of the cyanobacterium Prochlorococcus marinus SS120, a nearly minimal oxyphototrophic genome.</title>
        <authorList>
            <person name="Dufresne A."/>
            <person name="Salanoubat M."/>
            <person name="Partensky F."/>
            <person name="Artiguenave F."/>
            <person name="Axmann I.M."/>
            <person name="Barbe V."/>
            <person name="Duprat S."/>
            <person name="Galperin M.Y."/>
            <person name="Koonin E.V."/>
            <person name="Le Gall F."/>
            <person name="Makarova K.S."/>
            <person name="Ostrowski M."/>
            <person name="Oztas S."/>
            <person name="Robert C."/>
            <person name="Rogozin I.B."/>
            <person name="Scanlan D.J."/>
            <person name="Tandeau de Marsac N."/>
            <person name="Weissenbach J."/>
            <person name="Wincker P."/>
            <person name="Wolf Y.I."/>
            <person name="Hess W.R."/>
        </authorList>
    </citation>
    <scope>NUCLEOTIDE SEQUENCE [LARGE SCALE GENOMIC DNA]</scope>
    <source>
        <strain>SARG / CCMP1375 / SS120</strain>
    </source>
</reference>
<accession>Q7V9L9</accession>
<keyword id="KW-0067">ATP-binding</keyword>
<keyword id="KW-0963">Cytoplasm</keyword>
<keyword id="KW-0436">Ligase</keyword>
<keyword id="KW-0547">Nucleotide-binding</keyword>
<keyword id="KW-1185">Reference proteome</keyword>
<keyword id="KW-0819">tRNA processing</keyword>
<dbReference type="EC" id="6.3.4.19" evidence="1"/>
<dbReference type="EMBL" id="AE017126">
    <property type="protein sequence ID" value="AAQ00855.1"/>
    <property type="molecule type" value="Genomic_DNA"/>
</dbReference>
<dbReference type="RefSeq" id="NP_876202.1">
    <property type="nucleotide sequence ID" value="NC_005042.1"/>
</dbReference>
<dbReference type="RefSeq" id="WP_011125960.1">
    <property type="nucleotide sequence ID" value="NC_005042.1"/>
</dbReference>
<dbReference type="SMR" id="Q7V9L9"/>
<dbReference type="STRING" id="167539.Pro_1811"/>
<dbReference type="EnsemblBacteria" id="AAQ00855">
    <property type="protein sequence ID" value="AAQ00855"/>
    <property type="gene ID" value="Pro_1811"/>
</dbReference>
<dbReference type="KEGG" id="pma:Pro_1811"/>
<dbReference type="PATRIC" id="fig|167539.5.peg.1913"/>
<dbReference type="eggNOG" id="COG0037">
    <property type="taxonomic scope" value="Bacteria"/>
</dbReference>
<dbReference type="HOGENOM" id="CLU_018869_0_0_3"/>
<dbReference type="OrthoDB" id="9807403at2"/>
<dbReference type="Proteomes" id="UP000001420">
    <property type="component" value="Chromosome"/>
</dbReference>
<dbReference type="GO" id="GO:0005737">
    <property type="term" value="C:cytoplasm"/>
    <property type="evidence" value="ECO:0007669"/>
    <property type="project" value="UniProtKB-SubCell"/>
</dbReference>
<dbReference type="GO" id="GO:0005524">
    <property type="term" value="F:ATP binding"/>
    <property type="evidence" value="ECO:0007669"/>
    <property type="project" value="UniProtKB-UniRule"/>
</dbReference>
<dbReference type="GO" id="GO:0032267">
    <property type="term" value="F:tRNA(Ile)-lysidine synthase activity"/>
    <property type="evidence" value="ECO:0007669"/>
    <property type="project" value="UniProtKB-EC"/>
</dbReference>
<dbReference type="GO" id="GO:0006400">
    <property type="term" value="P:tRNA modification"/>
    <property type="evidence" value="ECO:0007669"/>
    <property type="project" value="UniProtKB-UniRule"/>
</dbReference>
<dbReference type="CDD" id="cd01992">
    <property type="entry name" value="TilS_N"/>
    <property type="match status" value="1"/>
</dbReference>
<dbReference type="Gene3D" id="3.40.50.620">
    <property type="entry name" value="HUPs"/>
    <property type="match status" value="1"/>
</dbReference>
<dbReference type="HAMAP" id="MF_01161">
    <property type="entry name" value="tRNA_Ile_lys_synt"/>
    <property type="match status" value="1"/>
</dbReference>
<dbReference type="InterPro" id="IPR014729">
    <property type="entry name" value="Rossmann-like_a/b/a_fold"/>
</dbReference>
<dbReference type="InterPro" id="IPR011063">
    <property type="entry name" value="TilS/TtcA_N"/>
</dbReference>
<dbReference type="InterPro" id="IPR012094">
    <property type="entry name" value="tRNA_Ile_lys_synt"/>
</dbReference>
<dbReference type="InterPro" id="IPR012795">
    <property type="entry name" value="tRNA_Ile_lys_synt_N"/>
</dbReference>
<dbReference type="InterPro" id="IPR015262">
    <property type="entry name" value="tRNA_Ile_lys_synt_subst-bd"/>
</dbReference>
<dbReference type="NCBIfam" id="TIGR02432">
    <property type="entry name" value="lysidine_TilS_N"/>
    <property type="match status" value="1"/>
</dbReference>
<dbReference type="PANTHER" id="PTHR43033">
    <property type="entry name" value="TRNA(ILE)-LYSIDINE SYNTHASE-RELATED"/>
    <property type="match status" value="1"/>
</dbReference>
<dbReference type="PANTHER" id="PTHR43033:SF1">
    <property type="entry name" value="TRNA(ILE)-LYSIDINE SYNTHASE-RELATED"/>
    <property type="match status" value="1"/>
</dbReference>
<dbReference type="Pfam" id="PF01171">
    <property type="entry name" value="ATP_bind_3"/>
    <property type="match status" value="1"/>
</dbReference>
<dbReference type="Pfam" id="PF09179">
    <property type="entry name" value="TilS"/>
    <property type="match status" value="1"/>
</dbReference>
<dbReference type="SUPFAM" id="SSF52402">
    <property type="entry name" value="Adenine nucleotide alpha hydrolases-like"/>
    <property type="match status" value="1"/>
</dbReference>
<dbReference type="SUPFAM" id="SSF82829">
    <property type="entry name" value="MesJ substrate recognition domain-like"/>
    <property type="match status" value="1"/>
</dbReference>
<name>TILS_PROMA</name>
<organism>
    <name type="scientific">Prochlorococcus marinus (strain SARG / CCMP1375 / SS120)</name>
    <dbReference type="NCBI Taxonomy" id="167539"/>
    <lineage>
        <taxon>Bacteria</taxon>
        <taxon>Bacillati</taxon>
        <taxon>Cyanobacteriota</taxon>
        <taxon>Cyanophyceae</taxon>
        <taxon>Synechococcales</taxon>
        <taxon>Prochlorococcaceae</taxon>
        <taxon>Prochlorococcus</taxon>
    </lineage>
</organism>
<sequence length="336" mass="38635">MTNSTKVEKPWTKWHERLHKSLKSKSNLLPYGSSLLISVSGGQDSMALLKLILDLQRIYEWKVHVWHGDHGWHNQSRQIAEELEEWCKCQKLSFFCNRTNKQKVSTEEDARNWRYKSLIQQAKTLSKESPSLPCERVLTGHTANDRTETFIMNLARGAHLKGLSSLREDRTLETKIQLIRPILRFSRQETIQICDEMDLPIWIDPSNSNIAYSRNKIRAEIIPVLESLHPQSTIRISNLAERLTSLQKDQHQLAHLALGALLTSTGLSRSKMTKLSKTVRAIILAQWLEDNKAPLLSSKQLEELSQKIGKNKGPGNMDISNHLKIRWNKNSIELIN</sequence>